<accession>Q5ZIB8</accession>
<keyword id="KW-1003">Cell membrane</keyword>
<keyword id="KW-0963">Cytoplasm</keyword>
<keyword id="KW-0472">Membrane</keyword>
<keyword id="KW-0539">Nucleus</keyword>
<keyword id="KW-1185">Reference proteome</keyword>
<protein>
    <recommendedName>
        <fullName>Phosphoinositide 3-kinase regulatory subunit 5</fullName>
        <shortName>PI3-kinase regulatory subunit 5</shortName>
    </recommendedName>
</protein>
<sequence length="881" mass="98374">MQHTTCTEDRIYHALERCLHGLSRDAVSSRWAAGLCLNCWSLQELVSRDAGNYLILVEKILGKAREVQEKCDYDLVMPLALLFYYAVLYAPHIPPDSELLLKAASIYHSFLTWPVPYCDVFRELLTFISDELKAPGISFQRLVRTEQGLPVKNYQSSTVTVLLLNRSEVQSEFLSIAEKLSSTEPPRHATLVLLLEHLYQVTFGTRCDLGSLHHLLKAKTLEELSEIYTSAAEAQEIAAASSDPVLARERLQSALRDIAGAAALPTIAGDAQPRRLQPIPIPTSRCYTYSWDQDNFDVLNDVLSKECSVVEPVASENEEDEEEEEEDVETDGCSPERDSLLSPISSISKDSVYSALSEDGPKHSCVSLFSSSKDSISELTVVSKKSLRSFVSSLKDCMDSGYAEDSDESSLDTLGRPELKVEKTHHKYRHTLTNKIYKLFKSKSQLVLRRDLKDCVDTGSLPLRRAESLCHPQAKPRIPARSRRAHSLPQHGLGQKLQTPQTPQLLSLPRRPFLSYDEDAKVATMRVVVFGSDRISGKVARAYSNLRLKESTCPTLTRYFKLQFFYVPVKRSCLLPAALLMHPPPSPSDLQLRALAQAEPTLAGAESSTNDISHYIGMLDPWYERNVLGLMNLPMDVLCQSAKPEAEPQEDSREQLPILADMILYYCRFATRPVLLQLYQTELTFIGGEKMTEVFIHSLELGHSAATRAIKASGPGSKRLGIDGDREAIPLTLQIAYSKTAISGRSQWNDVEKVCTSVNLSKACKKYEELASKTECLNLTMTEVVKRQNSKSKKSFNQLSVSQIKVDKVQIIGVQSSFAVCLDQDEQKILQSVTRCEISVCYRPRDSDPLALRRSSLTPQDPSEFHSLLCLPISTFSGALP</sequence>
<proteinExistence type="evidence at transcript level"/>
<gene>
    <name type="primary">PIK3R5</name>
    <name type="ORF">RCJMB04_28f9</name>
</gene>
<organism>
    <name type="scientific">Gallus gallus</name>
    <name type="common">Chicken</name>
    <dbReference type="NCBI Taxonomy" id="9031"/>
    <lineage>
        <taxon>Eukaryota</taxon>
        <taxon>Metazoa</taxon>
        <taxon>Chordata</taxon>
        <taxon>Craniata</taxon>
        <taxon>Vertebrata</taxon>
        <taxon>Euteleostomi</taxon>
        <taxon>Archelosauria</taxon>
        <taxon>Archosauria</taxon>
        <taxon>Dinosauria</taxon>
        <taxon>Saurischia</taxon>
        <taxon>Theropoda</taxon>
        <taxon>Coelurosauria</taxon>
        <taxon>Aves</taxon>
        <taxon>Neognathae</taxon>
        <taxon>Galloanserae</taxon>
        <taxon>Galliformes</taxon>
        <taxon>Phasianidae</taxon>
        <taxon>Phasianinae</taxon>
        <taxon>Gallus</taxon>
    </lineage>
</organism>
<dbReference type="EMBL" id="AJ720866">
    <property type="protein sequence ID" value="CAG32525.1"/>
    <property type="molecule type" value="mRNA"/>
</dbReference>
<dbReference type="RefSeq" id="NP_001025868.1">
    <property type="nucleotide sequence ID" value="NM_001030697.1"/>
</dbReference>
<dbReference type="SMR" id="Q5ZIB8"/>
<dbReference type="FunCoup" id="Q5ZIB8">
    <property type="interactions" value="78"/>
</dbReference>
<dbReference type="STRING" id="9031.ENSGALP00000038543"/>
<dbReference type="PaxDb" id="9031-ENSGALP00000001860"/>
<dbReference type="GeneID" id="417319"/>
<dbReference type="KEGG" id="gga:417319"/>
<dbReference type="CTD" id="23533"/>
<dbReference type="VEuPathDB" id="HostDB:geneid_417319"/>
<dbReference type="eggNOG" id="ENOG502QV4A">
    <property type="taxonomic scope" value="Eukaryota"/>
</dbReference>
<dbReference type="InParanoid" id="Q5ZIB8"/>
<dbReference type="OrthoDB" id="9932678at2759"/>
<dbReference type="PhylomeDB" id="Q5ZIB8"/>
<dbReference type="PRO" id="PR:Q5ZIB8"/>
<dbReference type="Proteomes" id="UP000000539">
    <property type="component" value="Unassembled WGS sequence"/>
</dbReference>
<dbReference type="GO" id="GO:0005737">
    <property type="term" value="C:cytoplasm"/>
    <property type="evidence" value="ECO:0007669"/>
    <property type="project" value="UniProtKB-SubCell"/>
</dbReference>
<dbReference type="GO" id="GO:0005634">
    <property type="term" value="C:nucleus"/>
    <property type="evidence" value="ECO:0007669"/>
    <property type="project" value="UniProtKB-SubCell"/>
</dbReference>
<dbReference type="GO" id="GO:0005942">
    <property type="term" value="C:phosphatidylinositol 3-kinase complex"/>
    <property type="evidence" value="ECO:0000318"/>
    <property type="project" value="GO_Central"/>
</dbReference>
<dbReference type="GO" id="GO:0005944">
    <property type="term" value="C:phosphatidylinositol 3-kinase complex, class IB"/>
    <property type="evidence" value="ECO:0007669"/>
    <property type="project" value="InterPro"/>
</dbReference>
<dbReference type="GO" id="GO:0005886">
    <property type="term" value="C:plasma membrane"/>
    <property type="evidence" value="ECO:0007669"/>
    <property type="project" value="UniProtKB-SubCell"/>
</dbReference>
<dbReference type="GO" id="GO:0046935">
    <property type="term" value="F:1-phosphatidylinositol-3-kinase regulator activity"/>
    <property type="evidence" value="ECO:0000318"/>
    <property type="project" value="GO_Central"/>
</dbReference>
<dbReference type="GO" id="GO:0007186">
    <property type="term" value="P:G protein-coupled receptor signaling pathway"/>
    <property type="evidence" value="ECO:0000318"/>
    <property type="project" value="GO_Central"/>
</dbReference>
<dbReference type="GO" id="GO:0051897">
    <property type="term" value="P:positive regulation of phosphatidylinositol 3-kinase/protein kinase B signal transduction"/>
    <property type="evidence" value="ECO:0000318"/>
    <property type="project" value="GO_Central"/>
</dbReference>
<dbReference type="InterPro" id="IPR019522">
    <property type="entry name" value="PIK3R5/6"/>
</dbReference>
<dbReference type="PANTHER" id="PTHR15593">
    <property type="entry name" value="PHOSPHATIDYLINOSITOL 3-KINASE REGULATORY SUBUNIT"/>
    <property type="match status" value="1"/>
</dbReference>
<dbReference type="PANTHER" id="PTHR15593:SF2">
    <property type="entry name" value="PHOSPHOINOSITIDE 3-KINASE REGULATORY SUBUNIT 5"/>
    <property type="match status" value="1"/>
</dbReference>
<dbReference type="Pfam" id="PF10486">
    <property type="entry name" value="PI3K_1B_p101"/>
    <property type="match status" value="1"/>
</dbReference>
<comment type="function">
    <text evidence="1">Regulatory subunit of the PI3K gamma complex.</text>
</comment>
<comment type="activity regulation">
    <text evidence="1">Greatly activated by G gamma proteins.</text>
</comment>
<comment type="subunit">
    <text evidence="1">Heterodimer. Interacts with a catalytic subunit and with G beta gamma proteins (By similarity).</text>
</comment>
<comment type="subcellular location">
    <subcellularLocation>
        <location evidence="2">Nucleus</location>
    </subcellularLocation>
    <subcellularLocation>
        <location evidence="2">Cytoplasm</location>
    </subcellularLocation>
    <subcellularLocation>
        <location evidence="2">Cell membrane</location>
        <topology evidence="2">Peripheral membrane protein</topology>
    </subcellularLocation>
</comment>
<comment type="domain">
    <text evidence="1">The heterodimerization region allows the binding to the catalytic subunit.</text>
</comment>
<name>PIRK5_CHICK</name>
<evidence type="ECO:0000250" key="1"/>
<evidence type="ECO:0000250" key="2">
    <source>
        <dbReference type="UniProtKB" id="O02696"/>
    </source>
</evidence>
<evidence type="ECO:0000256" key="3">
    <source>
        <dbReference type="SAM" id="MobiDB-lite"/>
    </source>
</evidence>
<feature type="chain" id="PRO_0000058447" description="Phosphoinositide 3-kinase regulatory subunit 5">
    <location>
        <begin position="1"/>
        <end position="881"/>
    </location>
</feature>
<feature type="region of interest" description="Heterodimerization" evidence="1">
    <location>
        <begin position="23"/>
        <end position="99"/>
    </location>
</feature>
<feature type="region of interest" description="Disordered" evidence="3">
    <location>
        <begin position="312"/>
        <end position="339"/>
    </location>
</feature>
<feature type="region of interest" description="Disordered" evidence="3">
    <location>
        <begin position="472"/>
        <end position="499"/>
    </location>
</feature>
<feature type="region of interest" description="Interaction with G beta gamma proteins" evidence="1">
    <location>
        <begin position="657"/>
        <end position="757"/>
    </location>
</feature>
<feature type="compositionally biased region" description="Acidic residues" evidence="3">
    <location>
        <begin position="316"/>
        <end position="330"/>
    </location>
</feature>
<reference key="1">
    <citation type="journal article" date="2005" name="Genome Biol.">
        <title>Full-length cDNAs from chicken bursal lymphocytes to facilitate gene function analysis.</title>
        <authorList>
            <person name="Caldwell R.B."/>
            <person name="Kierzek A.M."/>
            <person name="Arakawa H."/>
            <person name="Bezzubov Y."/>
            <person name="Zaim J."/>
            <person name="Fiedler P."/>
            <person name="Kutter S."/>
            <person name="Blagodatski A."/>
            <person name="Kostovska D."/>
            <person name="Koter M."/>
            <person name="Plachy J."/>
            <person name="Carninci P."/>
            <person name="Hayashizaki Y."/>
            <person name="Buerstedde J.-M."/>
        </authorList>
    </citation>
    <scope>NUCLEOTIDE SEQUENCE [LARGE SCALE MRNA]</scope>
    <source>
        <strain>CB</strain>
        <tissue>Bursa of Fabricius</tissue>
    </source>
</reference>